<dbReference type="EC" id="3.6.1.-" evidence="11 13"/>
<dbReference type="EMBL" id="AC107664">
    <property type="status" value="NOT_ANNOTATED_CDS"/>
    <property type="molecule type" value="Genomic_DNA"/>
</dbReference>
<dbReference type="EMBL" id="AC126942">
    <property type="status" value="NOT_ANNOTATED_CDS"/>
    <property type="molecule type" value="Genomic_DNA"/>
</dbReference>
<dbReference type="EMBL" id="AK016419">
    <property type="protein sequence ID" value="BAB30222.1"/>
    <property type="status" value="ALT_FRAME"/>
    <property type="molecule type" value="mRNA"/>
</dbReference>
<dbReference type="EMBL" id="AK078494">
    <property type="protein sequence ID" value="BAC37307.1"/>
    <property type="molecule type" value="mRNA"/>
</dbReference>
<dbReference type="EMBL" id="BC044905">
    <property type="protein sequence ID" value="AAH44905.1"/>
    <property type="status" value="ALT_INIT"/>
    <property type="molecule type" value="mRNA"/>
</dbReference>
<dbReference type="EMBL" id="BC058205">
    <property type="protein sequence ID" value="AAH58205.1"/>
    <property type="molecule type" value="mRNA"/>
</dbReference>
<dbReference type="EMBL" id="BC058618">
    <property type="protein sequence ID" value="AAH58618.1"/>
    <property type="molecule type" value="mRNA"/>
</dbReference>
<dbReference type="EMBL" id="BC062946">
    <property type="protein sequence ID" value="AAH62946.1"/>
    <property type="molecule type" value="mRNA"/>
</dbReference>
<dbReference type="EMBL" id="AK129181">
    <property type="protein sequence ID" value="BAC97991.1"/>
    <property type="molecule type" value="mRNA"/>
</dbReference>
<dbReference type="CCDS" id="CCDS28958.2"/>
<dbReference type="RefSeq" id="NP_083163.3">
    <property type="nucleotide sequence ID" value="NM_028887.3"/>
</dbReference>
<dbReference type="PDB" id="6N64">
    <property type="method" value="X-ray"/>
    <property type="resolution" value="3.30 A"/>
    <property type="chains" value="A/B/C/D/E/F=1683-1899"/>
</dbReference>
<dbReference type="PDBsum" id="6N64"/>
<dbReference type="SMR" id="Q6P5D8"/>
<dbReference type="BioGRID" id="216686">
    <property type="interactions" value="25"/>
</dbReference>
<dbReference type="FunCoup" id="Q6P5D8">
    <property type="interactions" value="2398"/>
</dbReference>
<dbReference type="IntAct" id="Q6P5D8">
    <property type="interactions" value="20"/>
</dbReference>
<dbReference type="MINT" id="Q6P5D8"/>
<dbReference type="STRING" id="10090.ENSMUSP00000121835"/>
<dbReference type="GlyGen" id="Q6P5D8">
    <property type="glycosylation" value="2 sites, 1 O-linked glycan (1 site)"/>
</dbReference>
<dbReference type="iPTMnet" id="Q6P5D8"/>
<dbReference type="PhosphoSitePlus" id="Q6P5D8"/>
<dbReference type="jPOST" id="Q6P5D8"/>
<dbReference type="PaxDb" id="10090-ENSMUSP00000121835"/>
<dbReference type="PeptideAtlas" id="Q6P5D8"/>
<dbReference type="ProteomicsDB" id="261270"/>
<dbReference type="Pumba" id="Q6P5D8"/>
<dbReference type="Antibodypedia" id="49899">
    <property type="antibodies" value="82 antibodies from 21 providers"/>
</dbReference>
<dbReference type="Ensembl" id="ENSMUST00000127430.2">
    <property type="protein sequence ID" value="ENSMUSP00000121835.2"/>
    <property type="gene ID" value="ENSMUSG00000024054.15"/>
</dbReference>
<dbReference type="GeneID" id="74355"/>
<dbReference type="KEGG" id="mmu:74355"/>
<dbReference type="UCSC" id="uc008dmh.2">
    <property type="organism name" value="mouse"/>
</dbReference>
<dbReference type="AGR" id="MGI:1921605"/>
<dbReference type="CTD" id="23347"/>
<dbReference type="MGI" id="MGI:1921605">
    <property type="gene designation" value="Smchd1"/>
</dbReference>
<dbReference type="VEuPathDB" id="HostDB:ENSMUSG00000024054"/>
<dbReference type="eggNOG" id="ENOG502QREW">
    <property type="taxonomic scope" value="Eukaryota"/>
</dbReference>
<dbReference type="GeneTree" id="ENSGT00390000006950"/>
<dbReference type="HOGENOM" id="CLU_002288_1_0_1"/>
<dbReference type="InParanoid" id="Q6P5D8"/>
<dbReference type="OMA" id="PIECFNR"/>
<dbReference type="OrthoDB" id="10036779at2759"/>
<dbReference type="PhylomeDB" id="Q6P5D8"/>
<dbReference type="TreeFam" id="TF329426"/>
<dbReference type="BioGRID-ORCS" id="74355">
    <property type="hits" value="2 hits in 62 CRISPR screens"/>
</dbReference>
<dbReference type="ChiTaRS" id="Smchd1">
    <property type="organism name" value="mouse"/>
</dbReference>
<dbReference type="PRO" id="PR:Q6P5D8"/>
<dbReference type="Proteomes" id="UP000000589">
    <property type="component" value="Chromosome 17"/>
</dbReference>
<dbReference type="RNAct" id="Q6P5D8">
    <property type="molecule type" value="protein"/>
</dbReference>
<dbReference type="Bgee" id="ENSMUSG00000024054">
    <property type="expression patterns" value="Expressed in manus and 235 other cell types or tissues"/>
</dbReference>
<dbReference type="ExpressionAtlas" id="Q6P5D8">
    <property type="expression patterns" value="baseline and differential"/>
</dbReference>
<dbReference type="GO" id="GO:0001740">
    <property type="term" value="C:Barr body"/>
    <property type="evidence" value="ECO:0000314"/>
    <property type="project" value="UniProtKB"/>
</dbReference>
<dbReference type="GO" id="GO:0000781">
    <property type="term" value="C:chromosome, telomeric region"/>
    <property type="evidence" value="ECO:0007669"/>
    <property type="project" value="Ensembl"/>
</dbReference>
<dbReference type="GO" id="GO:0016604">
    <property type="term" value="C:nuclear body"/>
    <property type="evidence" value="ECO:0007669"/>
    <property type="project" value="Ensembl"/>
</dbReference>
<dbReference type="GO" id="GO:0035861">
    <property type="term" value="C:site of double-strand break"/>
    <property type="evidence" value="ECO:0000250"/>
    <property type="project" value="UniProtKB"/>
</dbReference>
<dbReference type="GO" id="GO:0005524">
    <property type="term" value="F:ATP binding"/>
    <property type="evidence" value="ECO:0007669"/>
    <property type="project" value="InterPro"/>
</dbReference>
<dbReference type="GO" id="GO:0016887">
    <property type="term" value="F:ATP hydrolysis activity"/>
    <property type="evidence" value="ECO:0000314"/>
    <property type="project" value="UniProtKB"/>
</dbReference>
<dbReference type="GO" id="GO:0003677">
    <property type="term" value="F:DNA binding"/>
    <property type="evidence" value="ECO:0007669"/>
    <property type="project" value="UniProtKB-KW"/>
</dbReference>
<dbReference type="GO" id="GO:0042803">
    <property type="term" value="F:protein homodimerization activity"/>
    <property type="evidence" value="ECO:0000314"/>
    <property type="project" value="UniProtKB"/>
</dbReference>
<dbReference type="GO" id="GO:0051276">
    <property type="term" value="P:chromosome organization"/>
    <property type="evidence" value="ECO:0007669"/>
    <property type="project" value="InterPro"/>
</dbReference>
<dbReference type="GO" id="GO:0006302">
    <property type="term" value="P:double-strand break repair"/>
    <property type="evidence" value="ECO:0007669"/>
    <property type="project" value="InterPro"/>
</dbReference>
<dbReference type="GO" id="GO:0060818">
    <property type="term" value="P:inactivation of paternal X chromosome by genomic imprinting"/>
    <property type="evidence" value="ECO:0000315"/>
    <property type="project" value="MGI"/>
</dbReference>
<dbReference type="GO" id="GO:2000042">
    <property type="term" value="P:negative regulation of double-strand break repair via homologous recombination"/>
    <property type="evidence" value="ECO:0000250"/>
    <property type="project" value="UniProtKB"/>
</dbReference>
<dbReference type="GO" id="GO:0043584">
    <property type="term" value="P:nose development"/>
    <property type="evidence" value="ECO:0000250"/>
    <property type="project" value="UniProtKB"/>
</dbReference>
<dbReference type="GO" id="GO:0045739">
    <property type="term" value="P:positive regulation of DNA repair"/>
    <property type="evidence" value="ECO:0000250"/>
    <property type="project" value="UniProtKB"/>
</dbReference>
<dbReference type="GO" id="GO:2001034">
    <property type="term" value="P:positive regulation of double-strand break repair via nonhomologous end joining"/>
    <property type="evidence" value="ECO:0000250"/>
    <property type="project" value="UniProtKB"/>
</dbReference>
<dbReference type="CDD" id="cd16937">
    <property type="entry name" value="HATPase_SMCHD1-like"/>
    <property type="match status" value="1"/>
</dbReference>
<dbReference type="FunFam" id="3.30.565.10:FF:000060">
    <property type="entry name" value="Structural maintenance of chromosomes flexible hinge domain containing 1"/>
    <property type="match status" value="1"/>
</dbReference>
<dbReference type="Gene3D" id="3.30.565.10">
    <property type="entry name" value="Histidine kinase-like ATPase, C-terminal domain"/>
    <property type="match status" value="1"/>
</dbReference>
<dbReference type="InterPro" id="IPR036890">
    <property type="entry name" value="HATPase_C_sf"/>
</dbReference>
<dbReference type="InterPro" id="IPR010935">
    <property type="entry name" value="SMC_hinge"/>
</dbReference>
<dbReference type="InterPro" id="IPR036277">
    <property type="entry name" value="SMC_hinge_sf"/>
</dbReference>
<dbReference type="InterPro" id="IPR038892">
    <property type="entry name" value="SMCHD1"/>
</dbReference>
<dbReference type="InterPro" id="IPR055109">
    <property type="entry name" value="SMCHD1_S5"/>
</dbReference>
<dbReference type="PANTHER" id="PTHR22640">
    <property type="entry name" value="STRUCTURAL MAINTENANCE OF CHROMOSOMES FLEXIBLE HINGE DOMAIN-CONTAINING PROTEIN 1"/>
    <property type="match status" value="1"/>
</dbReference>
<dbReference type="PANTHER" id="PTHR22640:SF2">
    <property type="entry name" value="STRUCTURAL MAINTENANCE OF CHROMOSOMES FLEXIBLE HINGE DOMAIN-CONTAINING PROTEIN 1"/>
    <property type="match status" value="1"/>
</dbReference>
<dbReference type="Pfam" id="PF13589">
    <property type="entry name" value="HATPase_c_3"/>
    <property type="match status" value="1"/>
</dbReference>
<dbReference type="Pfam" id="PF06470">
    <property type="entry name" value="SMC_hinge"/>
    <property type="match status" value="1"/>
</dbReference>
<dbReference type="Pfam" id="PF22899">
    <property type="entry name" value="SMCHD1_S5"/>
    <property type="match status" value="1"/>
</dbReference>
<dbReference type="SMART" id="SM00968">
    <property type="entry name" value="SMC_hinge"/>
    <property type="match status" value="1"/>
</dbReference>
<dbReference type="SUPFAM" id="SSF55874">
    <property type="entry name" value="ATPase domain of HSP90 chaperone/DNA topoisomerase II/histidine kinase"/>
    <property type="match status" value="1"/>
</dbReference>
<dbReference type="SUPFAM" id="SSF75553">
    <property type="entry name" value="Smc hinge domain"/>
    <property type="match status" value="1"/>
</dbReference>
<gene>
    <name evidence="19 21" type="primary">Smchd1</name>
    <name evidence="18" type="synonym">Kiaa0650</name>
</gene>
<protein>
    <recommendedName>
        <fullName evidence="19">Structural maintenance of chromosomes flexible hinge domain-containing protein 1</fullName>
        <shortName evidence="19">SMC hinge domain-containing protein 1</shortName>
        <ecNumber evidence="11 13">3.6.1.-</ecNumber>
    </recommendedName>
</protein>
<organism>
    <name type="scientific">Mus musculus</name>
    <name type="common">Mouse</name>
    <dbReference type="NCBI Taxonomy" id="10090"/>
    <lineage>
        <taxon>Eukaryota</taxon>
        <taxon>Metazoa</taxon>
        <taxon>Chordata</taxon>
        <taxon>Craniata</taxon>
        <taxon>Vertebrata</taxon>
        <taxon>Euteleostomi</taxon>
        <taxon>Mammalia</taxon>
        <taxon>Eutheria</taxon>
        <taxon>Euarchontoglires</taxon>
        <taxon>Glires</taxon>
        <taxon>Rodentia</taxon>
        <taxon>Myomorpha</taxon>
        <taxon>Muroidea</taxon>
        <taxon>Muridae</taxon>
        <taxon>Murinae</taxon>
        <taxon>Mus</taxon>
        <taxon>Mus</taxon>
    </lineage>
</organism>
<evidence type="ECO:0000250" key="1">
    <source>
        <dbReference type="UniProtKB" id="A6NHR9"/>
    </source>
</evidence>
<evidence type="ECO:0000255" key="2"/>
<evidence type="ECO:0000256" key="3">
    <source>
        <dbReference type="SAM" id="MobiDB-lite"/>
    </source>
</evidence>
<evidence type="ECO:0000269" key="4">
    <source>
    </source>
</evidence>
<evidence type="ECO:0000269" key="5">
    <source>
    </source>
</evidence>
<evidence type="ECO:0000269" key="6">
    <source>
    </source>
</evidence>
<evidence type="ECO:0000269" key="7">
    <source>
    </source>
</evidence>
<evidence type="ECO:0000269" key="8">
    <source>
    </source>
</evidence>
<evidence type="ECO:0000269" key="9">
    <source>
    </source>
</evidence>
<evidence type="ECO:0000269" key="10">
    <source>
    </source>
</evidence>
<evidence type="ECO:0000269" key="11">
    <source>
    </source>
</evidence>
<evidence type="ECO:0000269" key="12">
    <source>
    </source>
</evidence>
<evidence type="ECO:0000269" key="13">
    <source>
    </source>
</evidence>
<evidence type="ECO:0000269" key="14">
    <source>
    </source>
</evidence>
<evidence type="ECO:0000269" key="15">
    <source>
    </source>
</evidence>
<evidence type="ECO:0000269" key="16">
    <source>
    </source>
</evidence>
<evidence type="ECO:0000269" key="17">
    <source>
    </source>
</evidence>
<evidence type="ECO:0000303" key="18">
    <source>
    </source>
</evidence>
<evidence type="ECO:0000303" key="19">
    <source>
    </source>
</evidence>
<evidence type="ECO:0000305" key="20"/>
<evidence type="ECO:0000312" key="21">
    <source>
        <dbReference type="MGI" id="MGI:1921605"/>
    </source>
</evidence>
<evidence type="ECO:0007744" key="22">
    <source>
    </source>
</evidence>
<evidence type="ECO:0007744" key="23">
    <source>
    </source>
</evidence>
<evidence type="ECO:0007829" key="24">
    <source>
        <dbReference type="PDB" id="6N64"/>
    </source>
</evidence>
<feature type="initiator methionine" description="Removed" evidence="1">
    <location>
        <position position="1"/>
    </location>
</feature>
<feature type="chain" id="PRO_0000332145" description="Structural maintenance of chromosomes flexible hinge domain-containing protein 1">
    <location>
        <begin position="2"/>
        <end position="2007"/>
    </location>
</feature>
<feature type="domain" description="SMC hinge" evidence="2">
    <location>
        <begin position="1721"/>
        <end position="1848"/>
    </location>
</feature>
<feature type="region of interest" description="ATPase activity domain" evidence="13">
    <location>
        <begin position="111"/>
        <end position="702"/>
    </location>
</feature>
<feature type="region of interest" description="Disordered" evidence="3">
    <location>
        <begin position="1984"/>
        <end position="2007"/>
    </location>
</feature>
<feature type="modified residue" description="N-acetylalanine" evidence="1">
    <location>
        <position position="2"/>
    </location>
</feature>
<feature type="modified residue" description="Phosphoserine" evidence="22">
    <location>
        <position position="833"/>
    </location>
</feature>
<feature type="modified residue" description="N6-acetyllysine" evidence="1">
    <location>
        <position position="1350"/>
    </location>
</feature>
<feature type="modified residue" description="Phosphothreonine" evidence="1">
    <location>
        <position position="1500"/>
    </location>
</feature>
<feature type="modified residue" description="N6-succinyllysine" evidence="23">
    <location>
        <position position="1803"/>
    </location>
</feature>
<feature type="modified residue" description="Phosphoserine" evidence="1">
    <location>
        <position position="1975"/>
    </location>
</feature>
<feature type="cross-link" description="Glycyl lysine isopeptide (Lys-Gly) (interchain with G-Cter in SUMO2)" evidence="1">
    <location>
        <position position="1375"/>
    </location>
</feature>
<feature type="mutagenesis site" description="Abolishes ATPase activity." evidence="11">
    <original>E</original>
    <variation>A</variation>
    <location>
        <position position="147"/>
    </location>
</feature>
<feature type="mutagenesis site" description="Abolishes ability to bind DNA without altering the ability of the SMC hinge domain to mediate homodimerization." evidence="10 12">
    <original>R</original>
    <variation>G</variation>
    <location>
        <position position="1867"/>
    </location>
</feature>
<feature type="mutagenesis site" description="Abolishes homodimerization." evidence="11">
    <original>GKFGG</original>
    <variation>AKFAA</variation>
    <location>
        <begin position="1872"/>
        <end position="1876"/>
    </location>
</feature>
<feature type="sequence conflict" description="In Ref. 1; BAB30222." evidence="20" ref="1">
    <original>K</original>
    <variation>E</variation>
    <location>
        <position position="1120"/>
    </location>
</feature>
<feature type="sequence conflict" description="In Ref. 4; BAC97991." evidence="20" ref="4">
    <original>P</original>
    <variation>S</variation>
    <location>
        <position position="1611"/>
    </location>
</feature>
<feature type="helix" evidence="24">
    <location>
        <begin position="1720"/>
        <end position="1728"/>
    </location>
</feature>
<feature type="helix" evidence="24">
    <location>
        <begin position="1736"/>
        <end position="1749"/>
    </location>
</feature>
<feature type="strand" evidence="24">
    <location>
        <begin position="1752"/>
        <end position="1757"/>
    </location>
</feature>
<feature type="helix" evidence="24">
    <location>
        <begin position="1758"/>
        <end position="1767"/>
    </location>
</feature>
<feature type="turn" evidence="24">
    <location>
        <begin position="1768"/>
        <end position="1770"/>
    </location>
</feature>
<feature type="strand" evidence="24">
    <location>
        <begin position="1774"/>
        <end position="1776"/>
    </location>
</feature>
<feature type="helix" evidence="24">
    <location>
        <begin position="1777"/>
        <end position="1779"/>
    </location>
</feature>
<feature type="strand" evidence="24">
    <location>
        <begin position="1797"/>
        <end position="1800"/>
    </location>
</feature>
<feature type="strand" evidence="24">
    <location>
        <begin position="1809"/>
        <end position="1811"/>
    </location>
</feature>
<feature type="helix" evidence="24">
    <location>
        <begin position="1812"/>
        <end position="1814"/>
    </location>
</feature>
<feature type="helix" evidence="24">
    <location>
        <begin position="1819"/>
        <end position="1821"/>
    </location>
</feature>
<feature type="helix" evidence="24">
    <location>
        <begin position="1824"/>
        <end position="1832"/>
    </location>
</feature>
<feature type="strand" evidence="24">
    <location>
        <begin position="1836"/>
        <end position="1840"/>
    </location>
</feature>
<feature type="helix" evidence="24">
    <location>
        <begin position="1841"/>
        <end position="1851"/>
    </location>
</feature>
<feature type="turn" evidence="24">
    <location>
        <begin position="1852"/>
        <end position="1854"/>
    </location>
</feature>
<feature type="strand" evidence="24">
    <location>
        <begin position="1860"/>
        <end position="1862"/>
    </location>
</feature>
<feature type="strand" evidence="24">
    <location>
        <begin position="1865"/>
        <end position="1868"/>
    </location>
</feature>
<feature type="helix" evidence="24">
    <location>
        <begin position="1877"/>
        <end position="1879"/>
    </location>
</feature>
<proteinExistence type="evidence at protein level"/>
<comment type="function">
    <text evidence="1 4 6 8 9 10 11 13 15 16 17">Non-canonical member of the structural maintenance of chromosomes (SMC) protein family that plays a key role in epigenetic silencing by regulating chromatin architecture (PubMed:26091879, PubMed:29887375). Promotes heterochromatin formation in both autosomes and chromosome X, probably by mediating the merge of chromatin compartments (PubMed:23754746, PubMed:23819640, PubMed:26391951, PubMed:28587678, PubMed:29887375). Plays a key role in chromosome X inactivation in females by promoting the spreading of heterochromatin (PubMed:18425126, PubMed:22841499, PubMed:26391951, PubMed:29887375). Recruited to inactivated chromosome X by Xist RNA and acts by mediating the merge of chromatin compartments: promotes random chromatin interactions that span the boundaries of existing structures, leading to create a compartment-less architecture typical of inactivated chromosome X (PubMed:29887375). Required to facilitate Xist RNA spreading (PubMed:29887375). Also required for silencing of a subset of clustered autosomal loci in somatic cells, such as the DUX4 locus (PubMed:23754746, PubMed:23819640, PubMed:28587678). Has ATPase activity; may participate in structural manipulation of chromatin in an ATP-dependent manner as part of its role in gene expression regulation (PubMed:26391951, PubMed:27059856). Also plays a role in DNA repair: localizes to sites of DNA double-strand breaks in response to DNA damage to promote the repair of DNA double-strand breaks (By similarity). Acts by promoting non-homologous end joining (NHEJ) and inhibiting homologous recombination (HR) repair (By similarity). Required during preimplantation development, probably acts by regulating chromatin architecture (PubMed:29900695).</text>
</comment>
<comment type="catalytic activity">
    <reaction evidence="11 13">
        <text>ATP + H2O = ADP + phosphate + H(+)</text>
        <dbReference type="Rhea" id="RHEA:13065"/>
        <dbReference type="ChEBI" id="CHEBI:15377"/>
        <dbReference type="ChEBI" id="CHEBI:15378"/>
        <dbReference type="ChEBI" id="CHEBI:30616"/>
        <dbReference type="ChEBI" id="CHEBI:43474"/>
        <dbReference type="ChEBI" id="CHEBI:456216"/>
    </reaction>
</comment>
<comment type="subunit">
    <text evidence="11 12 13">Homodimer; homodimerizes via its SMC hinge domain (PubMed:26391951, PubMed:26733688, PubMed:27059856). Interacts with LRIF1 (PubMed:26391951).</text>
</comment>
<comment type="subcellular location">
    <subcellularLocation>
        <location evidence="4 11 16">Chromosome</location>
    </subcellularLocation>
    <text evidence="1 16">Recruited to inactivated chromosome X in females by Xist RNA (PubMed:29887375). Localizes at sites of DNA damage at double-strand breaks (DSBs) (By similarity).</text>
</comment>
<comment type="tissue specificity">
    <text evidence="14">During embryogenesis, specifically expressed in immature olfactory sensory neurons.</text>
</comment>
<comment type="developmental stage">
    <text evidence="14">Expressed in the nasal placodes and optic vesicles at day 9.5 dpc and in the nasal epithelium at 12.5 dpc (PubMed:28067911). Expressed in the nasal cavity in 14.5 dpc animals (PubMed:28067911).</text>
</comment>
<comment type="induction">
    <text evidence="17">Expression is repressed by CDX2.</text>
</comment>
<comment type="domain">
    <text evidence="10 12 13">Atypical member of the structural maintenance of chromosomes (SMC) protein family (PubMed:26733688, PubMed:27059856). Like other members of the SMC family, has ATPase activity, which is probably necessary for its engagement with chromatin, and a SMC hinge domain (PubMed:26733688, PubMed:27059856). However, the SMC hinge domain adopts an unconventional homodimeric arrangement augmented by an intermolecular coiled coil formed between the two monomers. This suggests that protein may assemble as a head-to-head parallel dimer without adopting a hairpin shape at the hinge domain, unlike the dimeric arrangement conventionally found in other members of the SMC protein family (PubMed:26733688). The SMC hinge domain binds DNA and RNA (PubMed:26091879).</text>
</comment>
<comment type="PTM">
    <text evidence="7">Sumoylated with SUMO1.</text>
</comment>
<comment type="disruption phenotype">
    <text evidence="4 5 8 9 15">Defects in Smchd1 are the cause of the MommeD1 (modifier of murine metastable epialleles) phenotype, a semi-dominant suppressor of variegation (PubMed:18425126, PubMed:21553025). Mice display female-specific mid-gestation lethality and hypomethylation of the X-linked gene Hprt1, due to defects in X inactivation (PubMed:18425126, PubMed:21553025, PubMed:23754746). Mice do not show defects on telomeres length (PubMed:18425126, PubMed:21553025). Male mice are less affected, with some surviving to become fertile adults on the FVB/n genetic background (PubMed:18425126). On other genetic backgrounds, all males lacking die perinatally (PubMed:18425126). A subset of clustered autosomal loci display hypomethylation and derepression (PubMed:23754746, PubMed:23819640, PubMed:28587678).</text>
</comment>
<comment type="similarity">
    <text evidence="20">Belongs to the SMC family. Highly divergent.</text>
</comment>
<comment type="sequence caution" evidence="20">
    <conflict type="erroneous initiation">
        <sequence resource="EMBL-CDS" id="AAH44905"/>
    </conflict>
    <text>Truncated N-terminus.</text>
</comment>
<comment type="sequence caution" evidence="20">
    <conflict type="frameshift">
        <sequence resource="EMBL-CDS" id="BAB30222"/>
    </conflict>
</comment>
<accession>Q6P5D8</accession>
<accession>Q6PDM8</accession>
<accession>Q6PE93</accession>
<accession>Q6ZQ78</accession>
<accession>Q811H3</accession>
<accession>Q8BP09</accession>
<accession>Q9D4M7</accession>
<keyword id="KW-0002">3D-structure</keyword>
<keyword id="KW-0007">Acetylation</keyword>
<keyword id="KW-0156">Chromatin regulator</keyword>
<keyword id="KW-0158">Chromosome</keyword>
<keyword id="KW-0227">DNA damage</keyword>
<keyword id="KW-0234">DNA repair</keyword>
<keyword id="KW-0238">DNA-binding</keyword>
<keyword id="KW-0378">Hydrolase</keyword>
<keyword id="KW-1017">Isopeptide bond</keyword>
<keyword id="KW-0597">Phosphoprotein</keyword>
<keyword id="KW-1185">Reference proteome</keyword>
<keyword id="KW-0678">Repressor</keyword>
<keyword id="KW-0832">Ubl conjugation</keyword>
<reference key="1">
    <citation type="journal article" date="2009" name="PLoS Biol.">
        <title>Lineage-specific biology revealed by a finished genome assembly of the mouse.</title>
        <authorList>
            <person name="Church D.M."/>
            <person name="Goodstadt L."/>
            <person name="Hillier L.W."/>
            <person name="Zody M.C."/>
            <person name="Goldstein S."/>
            <person name="She X."/>
            <person name="Bult C.J."/>
            <person name="Agarwala R."/>
            <person name="Cherry J.L."/>
            <person name="DiCuccio M."/>
            <person name="Hlavina W."/>
            <person name="Kapustin Y."/>
            <person name="Meric P."/>
            <person name="Maglott D."/>
            <person name="Birtle Z."/>
            <person name="Marques A.C."/>
            <person name="Graves T."/>
            <person name="Zhou S."/>
            <person name="Teague B."/>
            <person name="Potamousis K."/>
            <person name="Churas C."/>
            <person name="Place M."/>
            <person name="Herschleb J."/>
            <person name="Runnheim R."/>
            <person name="Forrest D."/>
            <person name="Amos-Landgraf J."/>
            <person name="Schwartz D.C."/>
            <person name="Cheng Z."/>
            <person name="Lindblad-Toh K."/>
            <person name="Eichler E.E."/>
            <person name="Ponting C.P."/>
        </authorList>
    </citation>
    <scope>NUCLEOTIDE SEQUENCE [LARGE SCALE GENOMIC DNA]</scope>
    <source>
        <strain>C57BL/6J</strain>
    </source>
</reference>
<reference key="2">
    <citation type="journal article" date="2005" name="Science">
        <title>The transcriptional landscape of the mammalian genome.</title>
        <authorList>
            <person name="Carninci P."/>
            <person name="Kasukawa T."/>
            <person name="Katayama S."/>
            <person name="Gough J."/>
            <person name="Frith M.C."/>
            <person name="Maeda N."/>
            <person name="Oyama R."/>
            <person name="Ravasi T."/>
            <person name="Lenhard B."/>
            <person name="Wells C."/>
            <person name="Kodzius R."/>
            <person name="Shimokawa K."/>
            <person name="Bajic V.B."/>
            <person name="Brenner S.E."/>
            <person name="Batalov S."/>
            <person name="Forrest A.R."/>
            <person name="Zavolan M."/>
            <person name="Davis M.J."/>
            <person name="Wilming L.G."/>
            <person name="Aidinis V."/>
            <person name="Allen J.E."/>
            <person name="Ambesi-Impiombato A."/>
            <person name="Apweiler R."/>
            <person name="Aturaliya R.N."/>
            <person name="Bailey T.L."/>
            <person name="Bansal M."/>
            <person name="Baxter L."/>
            <person name="Beisel K.W."/>
            <person name="Bersano T."/>
            <person name="Bono H."/>
            <person name="Chalk A.M."/>
            <person name="Chiu K.P."/>
            <person name="Choudhary V."/>
            <person name="Christoffels A."/>
            <person name="Clutterbuck D.R."/>
            <person name="Crowe M.L."/>
            <person name="Dalla E."/>
            <person name="Dalrymple B.P."/>
            <person name="de Bono B."/>
            <person name="Della Gatta G."/>
            <person name="di Bernardo D."/>
            <person name="Down T."/>
            <person name="Engstrom P."/>
            <person name="Fagiolini M."/>
            <person name="Faulkner G."/>
            <person name="Fletcher C.F."/>
            <person name="Fukushima T."/>
            <person name="Furuno M."/>
            <person name="Futaki S."/>
            <person name="Gariboldi M."/>
            <person name="Georgii-Hemming P."/>
            <person name="Gingeras T.R."/>
            <person name="Gojobori T."/>
            <person name="Green R.E."/>
            <person name="Gustincich S."/>
            <person name="Harbers M."/>
            <person name="Hayashi Y."/>
            <person name="Hensch T.K."/>
            <person name="Hirokawa N."/>
            <person name="Hill D."/>
            <person name="Huminiecki L."/>
            <person name="Iacono M."/>
            <person name="Ikeo K."/>
            <person name="Iwama A."/>
            <person name="Ishikawa T."/>
            <person name="Jakt M."/>
            <person name="Kanapin A."/>
            <person name="Katoh M."/>
            <person name="Kawasawa Y."/>
            <person name="Kelso J."/>
            <person name="Kitamura H."/>
            <person name="Kitano H."/>
            <person name="Kollias G."/>
            <person name="Krishnan S.P."/>
            <person name="Kruger A."/>
            <person name="Kummerfeld S.K."/>
            <person name="Kurochkin I.V."/>
            <person name="Lareau L.F."/>
            <person name="Lazarevic D."/>
            <person name="Lipovich L."/>
            <person name="Liu J."/>
            <person name="Liuni S."/>
            <person name="McWilliam S."/>
            <person name="Madan Babu M."/>
            <person name="Madera M."/>
            <person name="Marchionni L."/>
            <person name="Matsuda H."/>
            <person name="Matsuzawa S."/>
            <person name="Miki H."/>
            <person name="Mignone F."/>
            <person name="Miyake S."/>
            <person name="Morris K."/>
            <person name="Mottagui-Tabar S."/>
            <person name="Mulder N."/>
            <person name="Nakano N."/>
            <person name="Nakauchi H."/>
            <person name="Ng P."/>
            <person name="Nilsson R."/>
            <person name="Nishiguchi S."/>
            <person name="Nishikawa S."/>
            <person name="Nori F."/>
            <person name="Ohara O."/>
            <person name="Okazaki Y."/>
            <person name="Orlando V."/>
            <person name="Pang K.C."/>
            <person name="Pavan W.J."/>
            <person name="Pavesi G."/>
            <person name="Pesole G."/>
            <person name="Petrovsky N."/>
            <person name="Piazza S."/>
            <person name="Reed J."/>
            <person name="Reid J.F."/>
            <person name="Ring B.Z."/>
            <person name="Ringwald M."/>
            <person name="Rost B."/>
            <person name="Ruan Y."/>
            <person name="Salzberg S.L."/>
            <person name="Sandelin A."/>
            <person name="Schneider C."/>
            <person name="Schoenbach C."/>
            <person name="Sekiguchi K."/>
            <person name="Semple C.A."/>
            <person name="Seno S."/>
            <person name="Sessa L."/>
            <person name="Sheng Y."/>
            <person name="Shibata Y."/>
            <person name="Shimada H."/>
            <person name="Shimada K."/>
            <person name="Silva D."/>
            <person name="Sinclair B."/>
            <person name="Sperling S."/>
            <person name="Stupka E."/>
            <person name="Sugiura K."/>
            <person name="Sultana R."/>
            <person name="Takenaka Y."/>
            <person name="Taki K."/>
            <person name="Tammoja K."/>
            <person name="Tan S.L."/>
            <person name="Tang S."/>
            <person name="Taylor M.S."/>
            <person name="Tegner J."/>
            <person name="Teichmann S.A."/>
            <person name="Ueda H.R."/>
            <person name="van Nimwegen E."/>
            <person name="Verardo R."/>
            <person name="Wei C.L."/>
            <person name="Yagi K."/>
            <person name="Yamanishi H."/>
            <person name="Zabarovsky E."/>
            <person name="Zhu S."/>
            <person name="Zimmer A."/>
            <person name="Hide W."/>
            <person name="Bult C."/>
            <person name="Grimmond S.M."/>
            <person name="Teasdale R.D."/>
            <person name="Liu E.T."/>
            <person name="Brusic V."/>
            <person name="Quackenbush J."/>
            <person name="Wahlestedt C."/>
            <person name="Mattick J.S."/>
            <person name="Hume D.A."/>
            <person name="Kai C."/>
            <person name="Sasaki D."/>
            <person name="Tomaru Y."/>
            <person name="Fukuda S."/>
            <person name="Kanamori-Katayama M."/>
            <person name="Suzuki M."/>
            <person name="Aoki J."/>
            <person name="Arakawa T."/>
            <person name="Iida J."/>
            <person name="Imamura K."/>
            <person name="Itoh M."/>
            <person name="Kato T."/>
            <person name="Kawaji H."/>
            <person name="Kawagashira N."/>
            <person name="Kawashima T."/>
            <person name="Kojima M."/>
            <person name="Kondo S."/>
            <person name="Konno H."/>
            <person name="Nakano K."/>
            <person name="Ninomiya N."/>
            <person name="Nishio T."/>
            <person name="Okada M."/>
            <person name="Plessy C."/>
            <person name="Shibata K."/>
            <person name="Shiraki T."/>
            <person name="Suzuki S."/>
            <person name="Tagami M."/>
            <person name="Waki K."/>
            <person name="Watahiki A."/>
            <person name="Okamura-Oho Y."/>
            <person name="Suzuki H."/>
            <person name="Kawai J."/>
            <person name="Hayashizaki Y."/>
        </authorList>
    </citation>
    <scope>NUCLEOTIDE SEQUENCE [LARGE SCALE MRNA] OF 1-272 AND 1116-2007</scope>
    <source>
        <strain>C57BL/6J</strain>
        <tissue>Muellerian duct</tissue>
    </source>
</reference>
<reference key="3">
    <citation type="journal article" date="2004" name="Genome Res.">
        <title>The status, quality, and expansion of the NIH full-length cDNA project: the Mammalian Gene Collection (MGC).</title>
        <authorList>
            <consortium name="The MGC Project Team"/>
        </authorList>
    </citation>
    <scope>NUCLEOTIDE SEQUENCE [LARGE SCALE MRNA] OF 660-2007</scope>
    <source>
        <strain>C57BL/6J</strain>
        <strain>Czech II</strain>
        <tissue>Brain</tissue>
        <tissue>Eye</tissue>
        <tissue>Mammary tumor</tissue>
    </source>
</reference>
<reference key="4">
    <citation type="journal article" date="2003" name="DNA Res.">
        <title>Prediction of the coding sequences of mouse homologues of KIAA gene: III. The complete nucleotide sequences of 500 mouse KIAA-homologous cDNAs identified by screening of terminal sequences of cDNA clones randomly sampled from size-fractionated libraries.</title>
        <authorList>
            <person name="Okazaki N."/>
            <person name="Kikuno R."/>
            <person name="Ohara R."/>
            <person name="Inamoto S."/>
            <person name="Koseki H."/>
            <person name="Hiraoka S."/>
            <person name="Saga Y."/>
            <person name="Nagase T."/>
            <person name="Ohara O."/>
            <person name="Koga H."/>
        </authorList>
    </citation>
    <scope>NUCLEOTIDE SEQUENCE [LARGE SCALE MRNA] OF 942-2007</scope>
    <source>
        <tissue>Embryonic tail</tissue>
    </source>
</reference>
<reference key="5">
    <citation type="journal article" date="2008" name="Nat. Genet.">
        <title>SmcHD1, containing a structural-maintenance-of-chromosomes hinge domain, has a critical role in X inactivation.</title>
        <authorList>
            <person name="Blewitt M.E."/>
            <person name="Gendrel A.V."/>
            <person name="Pang Z."/>
            <person name="Sparrow D.B."/>
            <person name="Whitelaw N."/>
            <person name="Craig J.M."/>
            <person name="Apedaile A."/>
            <person name="Hilton D.J."/>
            <person name="Dunwoodie S.L."/>
            <person name="Brockdorff N."/>
            <person name="Kay G.F."/>
            <person name="Whitelaw E."/>
        </authorList>
    </citation>
    <scope>FUNCTION</scope>
    <scope>DISRUPTION PHENOTYPE</scope>
    <scope>SUBCELLULAR LOCATION</scope>
</reference>
<reference key="6">
    <citation type="journal article" date="2010" name="Cell">
        <title>A tissue-specific atlas of mouse protein phosphorylation and expression.</title>
        <authorList>
            <person name="Huttlin E.L."/>
            <person name="Jedrychowski M.P."/>
            <person name="Elias J.E."/>
            <person name="Goswami T."/>
            <person name="Rad R."/>
            <person name="Beausoleil S.A."/>
            <person name="Villen J."/>
            <person name="Haas W."/>
            <person name="Sowa M.E."/>
            <person name="Gygi S.P."/>
        </authorList>
    </citation>
    <scope>PHOSPHORYLATION [LARGE SCALE ANALYSIS] AT SER-833</scope>
    <scope>IDENTIFICATION BY MASS SPECTROMETRY [LARGE SCALE ANALYSIS]</scope>
    <source>
        <tissue>Kidney</tissue>
        <tissue>Lung</tissue>
        <tissue>Pancreas</tissue>
        <tissue>Spleen</tissue>
        <tissue>Testis</tissue>
    </source>
</reference>
<reference key="7">
    <citation type="journal article" date="2011" name="Chromosoma">
        <title>Reduced dosage of the modifiers of epigenetic reprogramming Dnmt1, Dnmt3L, SmcHD1 and Foxo3a has no detectable effect on mouse telomere length in vivo.</title>
        <authorList>
            <person name="Roberts A.R."/>
            <person name="Blewitt M.E."/>
            <person name="Youngson N.A."/>
            <person name="Whitelaw E."/>
            <person name="Chong S."/>
        </authorList>
    </citation>
    <scope>DISRUPTION PHENOTYPE</scope>
</reference>
<reference key="8">
    <citation type="journal article" date="2012" name="Dev. Cell">
        <title>Smchd1-dependent and -independent pathways determine developmental dynamics of CpG island methylation on the inactive X chromosome.</title>
        <authorList>
            <person name="Gendrel A.V."/>
            <person name="Apedaile A."/>
            <person name="Coker H."/>
            <person name="Termanis A."/>
            <person name="Zvetkova I."/>
            <person name="Godwin J."/>
            <person name="Tang Y.A."/>
            <person name="Huntley D."/>
            <person name="Montana G."/>
            <person name="Taylor S."/>
            <person name="Giannoulatou E."/>
            <person name="Heard E."/>
            <person name="Stancheva I."/>
            <person name="Brockdorff N."/>
        </authorList>
    </citation>
    <scope>FUNCTION</scope>
</reference>
<reference key="9">
    <citation type="journal article" date="2012" name="Proc. Natl. Acad. Sci. U.S.A.">
        <title>In vivo localization and identification of SUMOylated proteins in the brain of His6-HA-SUMO1 knock-in mice.</title>
        <authorList>
            <person name="Tirard M."/>
            <person name="Hsiao H.H."/>
            <person name="Nikolov M."/>
            <person name="Urlaub H."/>
            <person name="Melchior F."/>
            <person name="Brose N."/>
        </authorList>
    </citation>
    <scope>SUMOYLATION WITH SUMO1</scope>
</reference>
<reference key="10">
    <citation type="journal article" date="2013" name="Mol. Cell">
        <title>SIRT5-mediated lysine desuccinylation impacts diverse metabolic pathways.</title>
        <authorList>
            <person name="Park J."/>
            <person name="Chen Y."/>
            <person name="Tishkoff D.X."/>
            <person name="Peng C."/>
            <person name="Tan M."/>
            <person name="Dai L."/>
            <person name="Xie Z."/>
            <person name="Zhang Y."/>
            <person name="Zwaans B.M."/>
            <person name="Skinner M.E."/>
            <person name="Lombard D.B."/>
            <person name="Zhao Y."/>
        </authorList>
    </citation>
    <scope>SUCCINYLATION [LARGE SCALE ANALYSIS] AT LYS-1803</scope>
    <scope>IDENTIFICATION BY MASS SPECTROMETRY [LARGE SCALE ANALYSIS]</scope>
    <source>
        <tissue>Embryonic fibroblast</tissue>
    </source>
</reference>
<reference key="11">
    <citation type="journal article" date="2013" name="Mol. Cell. Biol.">
        <title>Epigenetic functions of smchd1 repress gene clusters on the inactive X chromosome and on autosomes.</title>
        <authorList>
            <person name="Gendrel A.V."/>
            <person name="Tang Y.A."/>
            <person name="Suzuki M."/>
            <person name="Godwin J."/>
            <person name="Nesterova T.B."/>
            <person name="Greally J.M."/>
            <person name="Heard E."/>
            <person name="Brockdorff N."/>
        </authorList>
    </citation>
    <scope>FUNCTION</scope>
    <scope>DISRUPTION PHENOTYPE</scope>
</reference>
<reference key="12">
    <citation type="journal article" date="2013" name="Epigenetics Chromatin">
        <title>Smchd1 regulates a subset of autosomal genes subject to monoallelic expression in addition to being critical for X inactivation.</title>
        <authorList>
            <person name="Mould A.W."/>
            <person name="Pang Z."/>
            <person name="Pakusch M."/>
            <person name="Tonks I.D."/>
            <person name="Stark M."/>
            <person name="Carrie D."/>
            <person name="Mukhopadhyay P."/>
            <person name="Seidel A."/>
            <person name="Ellis J.J."/>
            <person name="Deakin J."/>
            <person name="Wakefield M.J."/>
            <person name="Krause L."/>
            <person name="Blewitt M.E."/>
            <person name="Kay G.F."/>
        </authorList>
    </citation>
    <scope>FUNCTION</scope>
    <scope>DISRUPTION PHENOTYPE</scope>
</reference>
<reference key="13">
    <citation type="journal article" date="2015" name="Mol. Cell. Biol.">
        <title>Independent Mechanisms Target SMCHD1 to Trimethylated Histone H3 Lysine 9-Modified Chromatin and the Inactive X Chromosome.</title>
        <authorList>
            <person name="Brideau N.J."/>
            <person name="Coker H."/>
            <person name="Gendrel A.V."/>
            <person name="Siebert C.A."/>
            <person name="Bezstarosti K."/>
            <person name="Demmers J."/>
            <person name="Poot R.A."/>
            <person name="Nesterova T.B."/>
            <person name="Brockdorff N."/>
        </authorList>
    </citation>
    <scope>FUNCTION</scope>
    <scope>CATALYTIC ACTIVITY</scope>
    <scope>SUBCELLULAR LOCATION</scope>
    <scope>SUBUNIT</scope>
    <scope>INTERACTION WITH LRIF1</scope>
    <scope>MUTAGENESIS OF GLU-147 AND 1872-GLY--GLY-1876</scope>
</reference>
<reference key="14">
    <citation type="journal article" date="2015" name="Proc. Natl. Acad. Sci. U.S.A.">
        <title>Genome-wide binding and mechanistic analyses of Smchd1-mediated epigenetic regulation.</title>
        <authorList>
            <person name="Chen K."/>
            <person name="Hu J."/>
            <person name="Moore D.L."/>
            <person name="Liu R."/>
            <person name="Kessans S.A."/>
            <person name="Breslin K."/>
            <person name="Lucet I.S."/>
            <person name="Keniry A."/>
            <person name="Leong H.S."/>
            <person name="Parish C.L."/>
            <person name="Hilton D.J."/>
            <person name="Lemmers R.J."/>
            <person name="van der Maarel S.M."/>
            <person name="Czabotar P.E."/>
            <person name="Dobson R.C."/>
            <person name="Ritchie M.E."/>
            <person name="Kay G.F."/>
            <person name="Murphy J.M."/>
            <person name="Blewitt M.E."/>
        </authorList>
    </citation>
    <scope>FUNCTION</scope>
    <scope>DOMAIN</scope>
    <scope>MUTAGENESIS OF ARG-1867</scope>
</reference>
<reference key="15">
    <citation type="journal article" date="2016" name="Biochem. J.">
        <title>The hinge domain of the epigenetic repressor Smchd1 adopts an unconventional homodimeric configuration.</title>
        <authorList>
            <person name="Chen K."/>
            <person name="Czabotar P.E."/>
            <person name="Blewitt M.E."/>
            <person name="Murphy J.M."/>
        </authorList>
    </citation>
    <scope>SUBUNIT</scope>
    <scope>DOMAIN</scope>
    <scope>MUTAGENESIS OF ARG-1867</scope>
</reference>
<reference key="16">
    <citation type="journal article" date="2016" name="Biochem. J.">
        <title>The epigenetic regulator Smchd1 contains a functional GHKL-type ATPase domain.</title>
        <authorList>
            <person name="Chen K."/>
            <person name="Dobson R.C."/>
            <person name="Lucet I.S."/>
            <person name="Young S.N."/>
            <person name="Pearce F.G."/>
            <person name="Blewitt M.E."/>
            <person name="Murphy J.M."/>
        </authorList>
    </citation>
    <scope>FUNCTION</scope>
    <scope>SUBUNIT</scope>
    <scope>DOMAIN</scope>
    <scope>CATALYTIC ACTIVITY</scope>
</reference>
<reference key="17">
    <citation type="journal article" date="2017" name="Nat. Genet.">
        <title>De novo mutations in SMCHD1 cause Bosma arhinia microphthalmia syndrome and abrogate nasal development.</title>
        <authorList>
            <person name="Gordon C.T."/>
            <person name="Xue S."/>
            <person name="Yigit G."/>
            <person name="Filali H."/>
            <person name="Chen K."/>
            <person name="Rosin N."/>
            <person name="Yoshiura K.I."/>
            <person name="Oufadem M."/>
            <person name="Beck T.J."/>
            <person name="McGowan R."/>
            <person name="Magee A.C."/>
            <person name="Altmueller J."/>
            <person name="Dion C."/>
            <person name="Thiele H."/>
            <person name="Gurzau A.D."/>
            <person name="Nuernberg P."/>
            <person name="Meschede D."/>
            <person name="Muehlbauer W."/>
            <person name="Okamoto N."/>
            <person name="Varghese V."/>
            <person name="Irving R."/>
            <person name="Sigaudy S."/>
            <person name="Williams D."/>
            <person name="Ahmed S.F."/>
            <person name="Bonnard C."/>
            <person name="Kong M.K."/>
            <person name="Ratbi I."/>
            <person name="Fejjal N."/>
            <person name="Fikri M."/>
            <person name="Elalaoui S.C."/>
            <person name="Reigstad H."/>
            <person name="Bole-Feysot C."/>
            <person name="Nitschke P."/>
            <person name="Ragge N."/>
            <person name="Levy N."/>
            <person name="Tuncbilek G."/>
            <person name="Teo A.S."/>
            <person name="Cunningham M.L."/>
            <person name="Sefiani A."/>
            <person name="Kayserili H."/>
            <person name="Murphy J.M."/>
            <person name="Chatdokmaiprai C."/>
            <person name="Hillmer A.M."/>
            <person name="Wattanasirichaigoon D."/>
            <person name="Lyonnet S."/>
            <person name="Magdinier F."/>
            <person name="Javed A."/>
            <person name="Blewitt M.E."/>
            <person name="Amiel J."/>
            <person name="Wollnik B."/>
            <person name="Reversade B."/>
        </authorList>
    </citation>
    <scope>TISSUE SPECIFICITY</scope>
    <scope>DEVELOPMENTAL STAGE</scope>
</reference>
<reference key="18">
    <citation type="journal article" date="2017" name="Skelet. Muscle">
        <title>SMCHD1 regulates a limited set of gene clusters on autosomal chromosomes.</title>
        <authorList>
            <person name="Mason A.G."/>
            <person name="Slieker R.C."/>
            <person name="Balog J."/>
            <person name="Lemmers R.J.L.F."/>
            <person name="Wong C.J."/>
            <person name="Yao Z."/>
            <person name="Lim J.W."/>
            <person name="Filippova G.N."/>
            <person name="Ne E."/>
            <person name="Tawil R."/>
            <person name="Heijmans B.T."/>
            <person name="Tapscott S.J."/>
            <person name="van der Maarel S.M."/>
        </authorList>
    </citation>
    <scope>FUNCTION</scope>
    <scope>DISRUPTION PHENOTYPE</scope>
</reference>
<reference key="19">
    <citation type="journal article" date="2018" name="Cell">
        <title>SMCHD1 merges chromosome compartments and assists formation of super-structures on the inactive X.</title>
        <authorList>
            <person name="Wang C.Y."/>
            <person name="Jegu T."/>
            <person name="Chu H.P."/>
            <person name="Oh H.J."/>
            <person name="Lee J.T."/>
        </authorList>
    </citation>
    <scope>FUNCTION</scope>
    <scope>SUBCELLULAR LOCATION</scope>
</reference>
<reference key="20">
    <citation type="journal article" date="2018" name="Mol. Reprod. Dev.">
        <title>Novel key roles for Structural maintenance of chromosome flexible domain containing 1 (Smchd1) during preimplantation mouse development.</title>
        <authorList>
            <person name="Midic U."/>
            <person name="Vincent K.A."/>
            <person name="Wang K."/>
            <person name="Lokken A."/>
            <person name="Severance A.L."/>
            <person name="Ralston A."/>
            <person name="Knott J.G."/>
            <person name="Latham K.E."/>
        </authorList>
    </citation>
    <scope>FUNCTION</scope>
    <scope>INDUCTION</scope>
</reference>
<name>SMHD1_MOUSE</name>
<sequence>MAAEGASDPAGLSEGSGRDGAVDGCRTVYLFDRRGKDSELGDRALQVSEHADYAGFRASVCQTIGISSEEKFVITTTSRKEITCNNFDHTVKDGVTLYLLQSVDQSLLTATKERIDFLPHYDTLVKSGMYEYYASEGQNPLPFALAELIDNSLSATSRNNGVRRIQIKLLFDETQGKPAVAVVDNGRGMTSKQLNNWAVYRLSKFTRQGDFESDHSGYVRPLPVPRSLNSDISYFGVGGKQAVFFVGQSARMISKPIDSKDVHELVLSKEDFEKKEKNKEAIYSGYIRNRKPADSAHITNDDERFLHNLIEEEKEKDSFTAVVITGVQPEHIQYLKNYLHLWTRQLTHIYHYYIHGPKGNEISTAKAIGPFNNIDIEISLFEKGKTPKIINLREIQDDMQTLYINTASDSFEFKAHVEGDGVVEGVIRYHPFLYDRETFPDDPCFPSKLKDEDDDDDCFISEKAARGKRPIFECFWNGRLIPYTSVGDFDWCAPPKKRGLVPIECFNRISGALFTNDKFQVSTNKLTFMDLELKLKDKNTLFTRILNGQEQRMKIDREFALWLKDCHEKHDKQIKFTLFKGIITRPDLPTKKQGPWATFSAIEWDGKIYKAGQLVKTIKTLPLCYGSIVRFFLHGDHDGEVYATGGEVQIAMEPQALYDEIKTVPIAKLDRTVAEKTIRKYVEDEMARLPDRLSVTWPEGDELLPNEVRPAGTPIGALRIEILNKKGEAMQKLPGTSHGGSKKLLVELKVILHTSSGNKEIISHISQHGGKWPYWFKKMENIQKLGNYTLKLQVVLNESNADTYAGRSLPSKVIKFSVKEGKPEKFSFGLLDSPFRVGVPFNIPLELQDEFGHTTQLLSDIEPVLEASGLSLHYEGITKGPNCVIQGVVAKGPVNSCQGKNFNLKVILPGLKEDSQILKIRLLPGPPHQLKVKPDSEVLVIENGTAFPFQVEVVDESDNITAQPKLIVHCKFLGAPNLPVYTVDCSSSGTSILTGSPIQVQNIKKDQKTLTARIEIPSCKDVSPVEKTIKLLPSSHAACLQIFSVEEQKAIQIKHQDEVTWVAGDVIRNLIFQMYDEGEREINITPSLAEKIKVNWTPEVNKEHLVQGLLPDVQVPTSVKDVRYCHVSFQDDHVCLESAFTVRPLPDDPKHLKCELKGGKTVQMGQELQGEIVVIIADQYGNQISSFSPDSLSTLSITGDGLDSSNLKITLEANSQSVSVQGIRFTPGPPGPKDLCFTWREFSDFLRVQLVSGPPTKLLLMDWPELKESIPVINGRQLENPLIVQLCDQWDNPALVPNVKICLIKASSLRLLPSNQQHKTDDKGRANLGVFTVCAPRGEHTVQVKGVYNKSTIEGPTIKLTILPDPEKPIRLNVKYDQDASFIAGDIFTDFMVSVISESGSVIKNINPTRISMKMWKLSSGMSRPPANAETFSCNKIKGNDKEDGCFYFREKTIPNKVGAYCIQFDFMIDKTNILSSQQVIVDVLPNQPMKLVPDSQPATPAVSNVRSIASRTLVKDLRLSITDNYGNHTGMDLVGTVVATIKGFNEEDTDTPLFIGKVRTLEFPFVKGSAEITTLVLAENSPGRDSTEYFIIFEPRLSTVSGTLESYSLPFMFYNDVKKQQQMAALTKEKDELSKSITMYRSLFDANKQLVDEMKCQAEEAKLKETQLRNELKAYNIDIPATQQTTHIEALLEKKITEQNELKKRPRRLCTLPNYTKRSGDILGKIAHLAQIEDDRAAMVISWHLASDMDCVVTLTTDAARAIYDETQGRQQVLPLDSIYRKTLPDWKRPLPHFRNGKLHFKPFGNPVFARDLLTFPDNIEHCETVFGMLLGDTIILDNLDAANHYRKEVVKITHCPTLLTRDGDRIRSNGKFGGLQNKAPPMDKLRGMVFGAPVPKQCVVLGKQIDLIQQYRTALYRLSSVNEDLDNQLQYLHTPDMKKKKQELDEQEKSLKRIEQKLGMTPVRRCNESLCHSPKIEVTECPIPTKRMRRESTRQNRRPKGDVPN</sequence>